<organism>
    <name type="scientific">Methanothermobacter thermautotrophicus</name>
    <name type="common">Methanobacterium thermoformicicum</name>
    <dbReference type="NCBI Taxonomy" id="145262"/>
    <lineage>
        <taxon>Archaea</taxon>
        <taxon>Methanobacteriati</taxon>
        <taxon>Methanobacteriota</taxon>
        <taxon>Methanomada group</taxon>
        <taxon>Methanobacteria</taxon>
        <taxon>Methanobacteriales</taxon>
        <taxon>Methanobacteriaceae</taxon>
        <taxon>Methanothermobacter</taxon>
    </lineage>
</organism>
<sequence>MNSSKLFFGWTDESSQNKGRYRAIGMVSHPAEFGSELEGDINSILDSVVDESGLKRRELKWNKIDIFRCRAYEKIVDYFLELSNLGNPPVRVDILRWDIEDSRHSIQGRDDNQNLQRMYYHLFSNVISKRWPSGDWCFFPDETGSVDWEEVAFFLDIGGSKVDLKEQFNILSINEVDSKDNVLVQVADFFAGLSVFSKEKFGLYVDWNYEECGQQRLVPVENVEFSKKDRKRFEILSYFNKRCKELKMGVSLDTSEGLWTPKPANSINFWHYEPQSDADKAPIR</sequence>
<protein>
    <recommendedName>
        <fullName>Uncharacterized protein ORF2'</fullName>
    </recommendedName>
</protein>
<feature type="chain" id="PRO_0000066436" description="Uncharacterized protein ORF2'">
    <location>
        <begin position="1"/>
        <end position="284"/>
    </location>
</feature>
<proteinExistence type="predicted"/>
<reference key="1">
    <citation type="journal article" date="1992" name="Nucleic Acids Res.">
        <title>Modular organization of related Archaeal plasmids encoding different restriction-modification systems in Methanobacterium thermoformicicum.</title>
        <authorList>
            <person name="Noelling J."/>
            <person name="van Eeden F.J.M."/>
            <person name="Eggen R.I.L."/>
            <person name="de Vos W.M."/>
        </authorList>
    </citation>
    <scope>NUCLEOTIDE SEQUENCE [GENOMIC DNA]</scope>
    <source>
        <strain>DSM 3720 / Z-245</strain>
    </source>
</reference>
<dbReference type="EMBL" id="X68367">
    <property type="protein sequence ID" value="CAA48441.1"/>
    <property type="molecule type" value="Genomic_DNA"/>
</dbReference>
<dbReference type="PIR" id="S30317">
    <property type="entry name" value="S26451"/>
</dbReference>
<dbReference type="RefSeq" id="NP_039769.1">
    <property type="nucleotide sequence ID" value="NC_001337.1"/>
</dbReference>
<dbReference type="RefSeq" id="WP_010889856.1">
    <property type="nucleotide sequence ID" value="NC_001337.1"/>
</dbReference>
<dbReference type="GeneID" id="24855009"/>
<dbReference type="GeneID" id="77402438"/>
<dbReference type="PRO" id="PR:P29572"/>
<dbReference type="InterPro" id="IPR024524">
    <property type="entry name" value="DUF3800"/>
</dbReference>
<dbReference type="Pfam" id="PF12686">
    <property type="entry name" value="DUF3800"/>
    <property type="match status" value="1"/>
</dbReference>
<keyword id="KW-0614">Plasmid</keyword>
<accession>P29572</accession>
<name>YPZ2_METTF</name>
<geneLocation type="plasmid">
    <name>pFZ1</name>
</geneLocation>